<proteinExistence type="inferred from homology"/>
<name>UPPP_SALPC</name>
<reference key="1">
    <citation type="journal article" date="2009" name="PLoS ONE">
        <title>Salmonella paratyphi C: genetic divergence from Salmonella choleraesuis and pathogenic convergence with Salmonella typhi.</title>
        <authorList>
            <person name="Liu W.-Q."/>
            <person name="Feng Y."/>
            <person name="Wang Y."/>
            <person name="Zou Q.-H."/>
            <person name="Chen F."/>
            <person name="Guo J.-T."/>
            <person name="Peng Y.-H."/>
            <person name="Jin Y."/>
            <person name="Li Y.-G."/>
            <person name="Hu S.-N."/>
            <person name="Johnston R.N."/>
            <person name="Liu G.-R."/>
            <person name="Liu S.-L."/>
        </authorList>
    </citation>
    <scope>NUCLEOTIDE SEQUENCE [LARGE SCALE GENOMIC DNA]</scope>
    <source>
        <strain>RKS4594</strain>
    </source>
</reference>
<sequence length="273" mass="29822">MSDMHSLLIAAILGVVEGLTEFLPVSSTGHMIIVGHLLGFEGDTAKTFEVVIQLGSILAVVVMFWRRLFGLIGIHFGRPLQREGESKGRLTLIHILLGMIPAVVLGLVFHDTIKSLFNPINVMYTLVVGGLLLIAAECLKPKEPRAPGLDDMTYRQAFMIGCFQCLALWPGFSRSGATISGGMLMGVSRYAASEFSFLLAVPMMMGATVLDLYKSWSFLTAADIPMFAVGFVTAFVVALIAIKTFLQLIKRISFIPFAIYRFVVAAAVYVVFF</sequence>
<gene>
    <name evidence="1" type="primary">uppP</name>
    <name type="ordered locus">SPC_3281</name>
</gene>
<keyword id="KW-0046">Antibiotic resistance</keyword>
<keyword id="KW-0997">Cell inner membrane</keyword>
<keyword id="KW-1003">Cell membrane</keyword>
<keyword id="KW-0133">Cell shape</keyword>
<keyword id="KW-0961">Cell wall biogenesis/degradation</keyword>
<keyword id="KW-0378">Hydrolase</keyword>
<keyword id="KW-0472">Membrane</keyword>
<keyword id="KW-0573">Peptidoglycan synthesis</keyword>
<keyword id="KW-0812">Transmembrane</keyword>
<keyword id="KW-1133">Transmembrane helix</keyword>
<comment type="function">
    <text evidence="1">Catalyzes the dephosphorylation of undecaprenyl diphosphate (UPP). Confers resistance to bacitracin.</text>
</comment>
<comment type="catalytic activity">
    <reaction evidence="1">
        <text>di-trans,octa-cis-undecaprenyl diphosphate + H2O = di-trans,octa-cis-undecaprenyl phosphate + phosphate + H(+)</text>
        <dbReference type="Rhea" id="RHEA:28094"/>
        <dbReference type="ChEBI" id="CHEBI:15377"/>
        <dbReference type="ChEBI" id="CHEBI:15378"/>
        <dbReference type="ChEBI" id="CHEBI:43474"/>
        <dbReference type="ChEBI" id="CHEBI:58405"/>
        <dbReference type="ChEBI" id="CHEBI:60392"/>
        <dbReference type="EC" id="3.6.1.27"/>
    </reaction>
</comment>
<comment type="subcellular location">
    <subcellularLocation>
        <location evidence="1">Cell inner membrane</location>
        <topology evidence="1">Multi-pass membrane protein</topology>
    </subcellularLocation>
</comment>
<comment type="miscellaneous">
    <text>Bacitracin is thought to be involved in the inhibition of peptidoglycan synthesis by sequestering undecaprenyl diphosphate, thereby reducing the pool of lipid carrier available.</text>
</comment>
<comment type="similarity">
    <text evidence="1">Belongs to the UppP family.</text>
</comment>
<protein>
    <recommendedName>
        <fullName evidence="1">Undecaprenyl-diphosphatase</fullName>
        <ecNumber evidence="1">3.6.1.27</ecNumber>
    </recommendedName>
    <alternativeName>
        <fullName evidence="1">Bacitracin resistance protein</fullName>
    </alternativeName>
    <alternativeName>
        <fullName evidence="1">Undecaprenyl pyrophosphate phosphatase</fullName>
    </alternativeName>
</protein>
<accession>C0PYX8</accession>
<feature type="chain" id="PRO_1000148824" description="Undecaprenyl-diphosphatase">
    <location>
        <begin position="1"/>
        <end position="273"/>
    </location>
</feature>
<feature type="transmembrane region" description="Helical" evidence="1">
    <location>
        <begin position="6"/>
        <end position="26"/>
    </location>
</feature>
<feature type="transmembrane region" description="Helical" evidence="1">
    <location>
        <begin position="45"/>
        <end position="65"/>
    </location>
</feature>
<feature type="transmembrane region" description="Helical" evidence="1">
    <location>
        <begin position="90"/>
        <end position="110"/>
    </location>
</feature>
<feature type="transmembrane region" description="Helical" evidence="1">
    <location>
        <begin position="116"/>
        <end position="136"/>
    </location>
</feature>
<feature type="transmembrane region" description="Helical" evidence="1">
    <location>
        <begin position="190"/>
        <end position="210"/>
    </location>
</feature>
<feature type="transmembrane region" description="Helical" evidence="1">
    <location>
        <begin position="222"/>
        <end position="242"/>
    </location>
</feature>
<feature type="transmembrane region" description="Helical" evidence="1">
    <location>
        <begin position="252"/>
        <end position="272"/>
    </location>
</feature>
<evidence type="ECO:0000255" key="1">
    <source>
        <dbReference type="HAMAP-Rule" id="MF_01006"/>
    </source>
</evidence>
<dbReference type="EC" id="3.6.1.27" evidence="1"/>
<dbReference type="EMBL" id="CP000857">
    <property type="protein sequence ID" value="ACN47366.1"/>
    <property type="molecule type" value="Genomic_DNA"/>
</dbReference>
<dbReference type="SMR" id="C0PYX8"/>
<dbReference type="KEGG" id="sei:SPC_3281"/>
<dbReference type="HOGENOM" id="CLU_060296_2_0_6"/>
<dbReference type="Proteomes" id="UP000001599">
    <property type="component" value="Chromosome"/>
</dbReference>
<dbReference type="GO" id="GO:0005886">
    <property type="term" value="C:plasma membrane"/>
    <property type="evidence" value="ECO:0007669"/>
    <property type="project" value="UniProtKB-SubCell"/>
</dbReference>
<dbReference type="GO" id="GO:0050380">
    <property type="term" value="F:undecaprenyl-diphosphatase activity"/>
    <property type="evidence" value="ECO:0007669"/>
    <property type="project" value="UniProtKB-UniRule"/>
</dbReference>
<dbReference type="GO" id="GO:0071555">
    <property type="term" value="P:cell wall organization"/>
    <property type="evidence" value="ECO:0007669"/>
    <property type="project" value="UniProtKB-KW"/>
</dbReference>
<dbReference type="GO" id="GO:0009252">
    <property type="term" value="P:peptidoglycan biosynthetic process"/>
    <property type="evidence" value="ECO:0007669"/>
    <property type="project" value="UniProtKB-KW"/>
</dbReference>
<dbReference type="GO" id="GO:0008360">
    <property type="term" value="P:regulation of cell shape"/>
    <property type="evidence" value="ECO:0007669"/>
    <property type="project" value="UniProtKB-KW"/>
</dbReference>
<dbReference type="GO" id="GO:0046677">
    <property type="term" value="P:response to antibiotic"/>
    <property type="evidence" value="ECO:0007669"/>
    <property type="project" value="UniProtKB-UniRule"/>
</dbReference>
<dbReference type="HAMAP" id="MF_01006">
    <property type="entry name" value="Undec_diphosphatase"/>
    <property type="match status" value="1"/>
</dbReference>
<dbReference type="InterPro" id="IPR003824">
    <property type="entry name" value="UppP"/>
</dbReference>
<dbReference type="NCBIfam" id="NF001388">
    <property type="entry name" value="PRK00281.1-1"/>
    <property type="match status" value="1"/>
</dbReference>
<dbReference type="NCBIfam" id="NF001389">
    <property type="entry name" value="PRK00281.1-2"/>
    <property type="match status" value="1"/>
</dbReference>
<dbReference type="NCBIfam" id="NF001390">
    <property type="entry name" value="PRK00281.1-4"/>
    <property type="match status" value="1"/>
</dbReference>
<dbReference type="NCBIfam" id="TIGR00753">
    <property type="entry name" value="undec_PP_bacA"/>
    <property type="match status" value="1"/>
</dbReference>
<dbReference type="PANTHER" id="PTHR30622">
    <property type="entry name" value="UNDECAPRENYL-DIPHOSPHATASE"/>
    <property type="match status" value="1"/>
</dbReference>
<dbReference type="PANTHER" id="PTHR30622:SF3">
    <property type="entry name" value="UNDECAPRENYL-DIPHOSPHATASE"/>
    <property type="match status" value="1"/>
</dbReference>
<dbReference type="Pfam" id="PF02673">
    <property type="entry name" value="BacA"/>
    <property type="match status" value="1"/>
</dbReference>
<organism>
    <name type="scientific">Salmonella paratyphi C (strain RKS4594)</name>
    <dbReference type="NCBI Taxonomy" id="476213"/>
    <lineage>
        <taxon>Bacteria</taxon>
        <taxon>Pseudomonadati</taxon>
        <taxon>Pseudomonadota</taxon>
        <taxon>Gammaproteobacteria</taxon>
        <taxon>Enterobacterales</taxon>
        <taxon>Enterobacteriaceae</taxon>
        <taxon>Salmonella</taxon>
    </lineage>
</organism>